<name>MURD_PROMT</name>
<sequence>MSKQEQSNQIHIVLGLGCSGISAAKLLKTEGKNVLVLENNSNKNLLNISNKLKSEGINVILLDEALHINNFTPWIESVCSITVSPGIDWEHIALKELRGKNINVQGEVALAWERLTHIPSVGITGTNGKTTVTNMLNHILKLNNLNTDMGGNVGKALSKIALENMKNNDQELDWLVLELSSFQIEGSPKVAPTIGIWTTFTPDHLERHNDMESYFKIKRSLLEKSSIRIYNSDDQYLSSKRKELPKGIWVGTNQQSLYSQYQKFWIDQKGYIFEDKKQLFHSSILNIPGKHNLQNLLLAIAAAREIGLDDSSIAKSIKSFKSIPHRLEYLGNVNNLSFYNDSKATNFDSSITALKSVPHPIILLAGGIQKKGDFMPWVKQIKQSTNGIVLFGLSANNLKEELLISSYIGEIIVKKNLEEATIASINIARETNSRSILLSPACASFDQYKNYEERGDHFKNLVKKYKLIK</sequence>
<protein>
    <recommendedName>
        <fullName evidence="1">UDP-N-acetylmuramoylalanine--D-glutamate ligase</fullName>
        <ecNumber evidence="1">6.3.2.9</ecNumber>
    </recommendedName>
    <alternativeName>
        <fullName evidence="1">D-glutamic acid-adding enzyme</fullName>
    </alternativeName>
    <alternativeName>
        <fullName evidence="1">UDP-N-acetylmuramoyl-L-alanyl-D-glutamate synthetase</fullName>
    </alternativeName>
</protein>
<feature type="chain" id="PRO_0000257215" description="UDP-N-acetylmuramoylalanine--D-glutamate ligase">
    <location>
        <begin position="1"/>
        <end position="469"/>
    </location>
</feature>
<feature type="binding site" evidence="1">
    <location>
        <begin position="125"/>
        <end position="131"/>
    </location>
    <ligand>
        <name>ATP</name>
        <dbReference type="ChEBI" id="CHEBI:30616"/>
    </ligand>
</feature>
<reference key="1">
    <citation type="journal article" date="2007" name="PLoS Genet.">
        <title>Patterns and implications of gene gain and loss in the evolution of Prochlorococcus.</title>
        <authorList>
            <person name="Kettler G.C."/>
            <person name="Martiny A.C."/>
            <person name="Huang K."/>
            <person name="Zucker J."/>
            <person name="Coleman M.L."/>
            <person name="Rodrigue S."/>
            <person name="Chen F."/>
            <person name="Lapidus A."/>
            <person name="Ferriera S."/>
            <person name="Johnson J."/>
            <person name="Steglich C."/>
            <person name="Church G.M."/>
            <person name="Richardson P."/>
            <person name="Chisholm S.W."/>
        </authorList>
    </citation>
    <scope>NUCLEOTIDE SEQUENCE [LARGE SCALE GENOMIC DNA]</scope>
    <source>
        <strain>NATL2A</strain>
    </source>
</reference>
<organism>
    <name type="scientific">Prochlorococcus marinus (strain NATL2A)</name>
    <dbReference type="NCBI Taxonomy" id="59920"/>
    <lineage>
        <taxon>Bacteria</taxon>
        <taxon>Bacillati</taxon>
        <taxon>Cyanobacteriota</taxon>
        <taxon>Cyanophyceae</taxon>
        <taxon>Synechococcales</taxon>
        <taxon>Prochlorococcaceae</taxon>
        <taxon>Prochlorococcus</taxon>
    </lineage>
</organism>
<accession>Q46JA8</accession>
<keyword id="KW-0067">ATP-binding</keyword>
<keyword id="KW-0131">Cell cycle</keyword>
<keyword id="KW-0132">Cell division</keyword>
<keyword id="KW-0133">Cell shape</keyword>
<keyword id="KW-0961">Cell wall biogenesis/degradation</keyword>
<keyword id="KW-0963">Cytoplasm</keyword>
<keyword id="KW-0436">Ligase</keyword>
<keyword id="KW-0547">Nucleotide-binding</keyword>
<keyword id="KW-0573">Peptidoglycan synthesis</keyword>
<keyword id="KW-1185">Reference proteome</keyword>
<dbReference type="EC" id="6.3.2.9" evidence="1"/>
<dbReference type="EMBL" id="CP000095">
    <property type="protein sequence ID" value="AAZ58420.1"/>
    <property type="molecule type" value="Genomic_DNA"/>
</dbReference>
<dbReference type="RefSeq" id="WP_011295277.1">
    <property type="nucleotide sequence ID" value="NC_007335.2"/>
</dbReference>
<dbReference type="SMR" id="Q46JA8"/>
<dbReference type="STRING" id="59920.PMN2A_0929"/>
<dbReference type="KEGG" id="pmn:PMN2A_0929"/>
<dbReference type="HOGENOM" id="CLU_032540_0_0_3"/>
<dbReference type="OrthoDB" id="9809796at2"/>
<dbReference type="PhylomeDB" id="Q46JA8"/>
<dbReference type="UniPathway" id="UPA00219"/>
<dbReference type="Proteomes" id="UP000002535">
    <property type="component" value="Chromosome"/>
</dbReference>
<dbReference type="GO" id="GO:0005737">
    <property type="term" value="C:cytoplasm"/>
    <property type="evidence" value="ECO:0007669"/>
    <property type="project" value="UniProtKB-SubCell"/>
</dbReference>
<dbReference type="GO" id="GO:0005524">
    <property type="term" value="F:ATP binding"/>
    <property type="evidence" value="ECO:0007669"/>
    <property type="project" value="UniProtKB-UniRule"/>
</dbReference>
<dbReference type="GO" id="GO:0008764">
    <property type="term" value="F:UDP-N-acetylmuramoylalanine-D-glutamate ligase activity"/>
    <property type="evidence" value="ECO:0007669"/>
    <property type="project" value="UniProtKB-UniRule"/>
</dbReference>
<dbReference type="GO" id="GO:0051301">
    <property type="term" value="P:cell division"/>
    <property type="evidence" value="ECO:0007669"/>
    <property type="project" value="UniProtKB-KW"/>
</dbReference>
<dbReference type="GO" id="GO:0071555">
    <property type="term" value="P:cell wall organization"/>
    <property type="evidence" value="ECO:0007669"/>
    <property type="project" value="UniProtKB-KW"/>
</dbReference>
<dbReference type="GO" id="GO:0009252">
    <property type="term" value="P:peptidoglycan biosynthetic process"/>
    <property type="evidence" value="ECO:0007669"/>
    <property type="project" value="UniProtKB-UniRule"/>
</dbReference>
<dbReference type="GO" id="GO:0008360">
    <property type="term" value="P:regulation of cell shape"/>
    <property type="evidence" value="ECO:0007669"/>
    <property type="project" value="UniProtKB-KW"/>
</dbReference>
<dbReference type="Gene3D" id="3.90.190.20">
    <property type="entry name" value="Mur ligase, C-terminal domain"/>
    <property type="match status" value="1"/>
</dbReference>
<dbReference type="Gene3D" id="3.40.1190.10">
    <property type="entry name" value="Mur-like, catalytic domain"/>
    <property type="match status" value="1"/>
</dbReference>
<dbReference type="Gene3D" id="3.40.50.720">
    <property type="entry name" value="NAD(P)-binding Rossmann-like Domain"/>
    <property type="match status" value="1"/>
</dbReference>
<dbReference type="HAMAP" id="MF_00639">
    <property type="entry name" value="MurD"/>
    <property type="match status" value="1"/>
</dbReference>
<dbReference type="InterPro" id="IPR036565">
    <property type="entry name" value="Mur-like_cat_sf"/>
</dbReference>
<dbReference type="InterPro" id="IPR036615">
    <property type="entry name" value="Mur_ligase_C_dom_sf"/>
</dbReference>
<dbReference type="InterPro" id="IPR013221">
    <property type="entry name" value="Mur_ligase_cen"/>
</dbReference>
<dbReference type="InterPro" id="IPR005762">
    <property type="entry name" value="MurD"/>
</dbReference>
<dbReference type="NCBIfam" id="TIGR01087">
    <property type="entry name" value="murD"/>
    <property type="match status" value="1"/>
</dbReference>
<dbReference type="PANTHER" id="PTHR43692">
    <property type="entry name" value="UDP-N-ACETYLMURAMOYLALANINE--D-GLUTAMATE LIGASE"/>
    <property type="match status" value="1"/>
</dbReference>
<dbReference type="PANTHER" id="PTHR43692:SF1">
    <property type="entry name" value="UDP-N-ACETYLMURAMOYLALANINE--D-GLUTAMATE LIGASE"/>
    <property type="match status" value="1"/>
</dbReference>
<dbReference type="Pfam" id="PF08245">
    <property type="entry name" value="Mur_ligase_M"/>
    <property type="match status" value="1"/>
</dbReference>
<dbReference type="Pfam" id="PF21799">
    <property type="entry name" value="MurD-like_N"/>
    <property type="match status" value="1"/>
</dbReference>
<dbReference type="SUPFAM" id="SSF51984">
    <property type="entry name" value="MurCD N-terminal domain"/>
    <property type="match status" value="1"/>
</dbReference>
<dbReference type="SUPFAM" id="SSF53623">
    <property type="entry name" value="MurD-like peptide ligases, catalytic domain"/>
    <property type="match status" value="1"/>
</dbReference>
<dbReference type="SUPFAM" id="SSF53244">
    <property type="entry name" value="MurD-like peptide ligases, peptide-binding domain"/>
    <property type="match status" value="1"/>
</dbReference>
<gene>
    <name evidence="1" type="primary">murD</name>
    <name type="ordered locus">PMN2A_0929</name>
</gene>
<comment type="function">
    <text evidence="1">Cell wall formation. Catalyzes the addition of glutamate to the nucleotide precursor UDP-N-acetylmuramoyl-L-alanine (UMA).</text>
</comment>
<comment type="catalytic activity">
    <reaction evidence="1">
        <text>UDP-N-acetyl-alpha-D-muramoyl-L-alanine + D-glutamate + ATP = UDP-N-acetyl-alpha-D-muramoyl-L-alanyl-D-glutamate + ADP + phosphate + H(+)</text>
        <dbReference type="Rhea" id="RHEA:16429"/>
        <dbReference type="ChEBI" id="CHEBI:15378"/>
        <dbReference type="ChEBI" id="CHEBI:29986"/>
        <dbReference type="ChEBI" id="CHEBI:30616"/>
        <dbReference type="ChEBI" id="CHEBI:43474"/>
        <dbReference type="ChEBI" id="CHEBI:83898"/>
        <dbReference type="ChEBI" id="CHEBI:83900"/>
        <dbReference type="ChEBI" id="CHEBI:456216"/>
        <dbReference type="EC" id="6.3.2.9"/>
    </reaction>
</comment>
<comment type="pathway">
    <text evidence="1">Cell wall biogenesis; peptidoglycan biosynthesis.</text>
</comment>
<comment type="subcellular location">
    <subcellularLocation>
        <location evidence="1">Cytoplasm</location>
    </subcellularLocation>
</comment>
<comment type="similarity">
    <text evidence="1">Belongs to the MurCDEF family.</text>
</comment>
<proteinExistence type="inferred from homology"/>
<evidence type="ECO:0000255" key="1">
    <source>
        <dbReference type="HAMAP-Rule" id="MF_00639"/>
    </source>
</evidence>